<gene>
    <name evidence="1" type="primary">rlmH</name>
    <name type="ordered locus">ETA_23520</name>
</gene>
<proteinExistence type="inferred from homology"/>
<sequence length="156" mass="17463">MKLQLVAVGTKMPDWVQTGFMEYLRRFPKDMPFELTEVPAGKRGKNADIKRILEKEGEMMLAATGKGNRIVTLDIPGQPWETPQLASQLERWKQDGRDVSLLIGGPEGLSPACKAAAEQSWSLSALTLPHPLVRVLVAESLYRAWSITANHPYHRE</sequence>
<accession>B2VBM9</accession>
<feature type="chain" id="PRO_0000366590" description="Ribosomal RNA large subunit methyltransferase H">
    <location>
        <begin position="1"/>
        <end position="156"/>
    </location>
</feature>
<feature type="binding site" evidence="1">
    <location>
        <position position="73"/>
    </location>
    <ligand>
        <name>S-adenosyl-L-methionine</name>
        <dbReference type="ChEBI" id="CHEBI:59789"/>
    </ligand>
</feature>
<feature type="binding site" evidence="1">
    <location>
        <position position="104"/>
    </location>
    <ligand>
        <name>S-adenosyl-L-methionine</name>
        <dbReference type="ChEBI" id="CHEBI:59789"/>
    </ligand>
</feature>
<feature type="binding site" evidence="1">
    <location>
        <begin position="123"/>
        <end position="128"/>
    </location>
    <ligand>
        <name>S-adenosyl-L-methionine</name>
        <dbReference type="ChEBI" id="CHEBI:59789"/>
    </ligand>
</feature>
<evidence type="ECO:0000255" key="1">
    <source>
        <dbReference type="HAMAP-Rule" id="MF_00658"/>
    </source>
</evidence>
<name>RLMH_ERWT9</name>
<dbReference type="EC" id="2.1.1.177" evidence="1"/>
<dbReference type="EMBL" id="CU468135">
    <property type="protein sequence ID" value="CAO97398.1"/>
    <property type="molecule type" value="Genomic_DNA"/>
</dbReference>
<dbReference type="RefSeq" id="WP_012442067.1">
    <property type="nucleotide sequence ID" value="NC_010694.1"/>
</dbReference>
<dbReference type="SMR" id="B2VBM9"/>
<dbReference type="STRING" id="465817.ETA_23520"/>
<dbReference type="GeneID" id="89475137"/>
<dbReference type="KEGG" id="eta:ETA_23520"/>
<dbReference type="eggNOG" id="COG1576">
    <property type="taxonomic scope" value="Bacteria"/>
</dbReference>
<dbReference type="HOGENOM" id="CLU_100552_1_0_6"/>
<dbReference type="OrthoDB" id="9806643at2"/>
<dbReference type="Proteomes" id="UP000001726">
    <property type="component" value="Chromosome"/>
</dbReference>
<dbReference type="GO" id="GO:0005737">
    <property type="term" value="C:cytoplasm"/>
    <property type="evidence" value="ECO:0007669"/>
    <property type="project" value="UniProtKB-SubCell"/>
</dbReference>
<dbReference type="GO" id="GO:0070038">
    <property type="term" value="F:rRNA (pseudouridine-N3-)-methyltransferase activity"/>
    <property type="evidence" value="ECO:0007669"/>
    <property type="project" value="UniProtKB-UniRule"/>
</dbReference>
<dbReference type="CDD" id="cd18081">
    <property type="entry name" value="RlmH-like"/>
    <property type="match status" value="1"/>
</dbReference>
<dbReference type="FunFam" id="3.40.1280.10:FF:000004">
    <property type="entry name" value="Ribosomal RNA large subunit methyltransferase H"/>
    <property type="match status" value="1"/>
</dbReference>
<dbReference type="Gene3D" id="3.40.1280.10">
    <property type="match status" value="1"/>
</dbReference>
<dbReference type="HAMAP" id="MF_00658">
    <property type="entry name" value="23SrRNA_methyltr_H"/>
    <property type="match status" value="1"/>
</dbReference>
<dbReference type="InterPro" id="IPR029028">
    <property type="entry name" value="Alpha/beta_knot_MTases"/>
</dbReference>
<dbReference type="InterPro" id="IPR003742">
    <property type="entry name" value="RlmH-like"/>
</dbReference>
<dbReference type="InterPro" id="IPR029026">
    <property type="entry name" value="tRNA_m1G_MTases_N"/>
</dbReference>
<dbReference type="NCBIfam" id="NF000984">
    <property type="entry name" value="PRK00103.1-1"/>
    <property type="match status" value="1"/>
</dbReference>
<dbReference type="NCBIfam" id="NF000986">
    <property type="entry name" value="PRK00103.1-4"/>
    <property type="match status" value="1"/>
</dbReference>
<dbReference type="NCBIfam" id="TIGR00246">
    <property type="entry name" value="tRNA_RlmH_YbeA"/>
    <property type="match status" value="1"/>
</dbReference>
<dbReference type="PANTHER" id="PTHR33603">
    <property type="entry name" value="METHYLTRANSFERASE"/>
    <property type="match status" value="1"/>
</dbReference>
<dbReference type="PANTHER" id="PTHR33603:SF1">
    <property type="entry name" value="RIBOSOMAL RNA LARGE SUBUNIT METHYLTRANSFERASE H"/>
    <property type="match status" value="1"/>
</dbReference>
<dbReference type="Pfam" id="PF02590">
    <property type="entry name" value="SPOUT_MTase"/>
    <property type="match status" value="1"/>
</dbReference>
<dbReference type="PIRSF" id="PIRSF004505">
    <property type="entry name" value="MT_bac"/>
    <property type="match status" value="1"/>
</dbReference>
<dbReference type="SUPFAM" id="SSF75217">
    <property type="entry name" value="alpha/beta knot"/>
    <property type="match status" value="1"/>
</dbReference>
<reference key="1">
    <citation type="journal article" date="2008" name="Environ. Microbiol.">
        <title>The genome of Erwinia tasmaniensis strain Et1/99, a non-pathogenic bacterium in the genus Erwinia.</title>
        <authorList>
            <person name="Kube M."/>
            <person name="Migdoll A.M."/>
            <person name="Mueller I."/>
            <person name="Kuhl H."/>
            <person name="Beck A."/>
            <person name="Reinhardt R."/>
            <person name="Geider K."/>
        </authorList>
    </citation>
    <scope>NUCLEOTIDE SEQUENCE [LARGE SCALE GENOMIC DNA]</scope>
    <source>
        <strain>DSM 17950 / CFBP 7177 / CIP 109463 / NCPPB 4357 / Et1/99</strain>
    </source>
</reference>
<organism>
    <name type="scientific">Erwinia tasmaniensis (strain DSM 17950 / CFBP 7177 / CIP 109463 / NCPPB 4357 / Et1/99)</name>
    <dbReference type="NCBI Taxonomy" id="465817"/>
    <lineage>
        <taxon>Bacteria</taxon>
        <taxon>Pseudomonadati</taxon>
        <taxon>Pseudomonadota</taxon>
        <taxon>Gammaproteobacteria</taxon>
        <taxon>Enterobacterales</taxon>
        <taxon>Erwiniaceae</taxon>
        <taxon>Erwinia</taxon>
    </lineage>
</organism>
<comment type="function">
    <text evidence="1">Specifically methylates the pseudouridine at position 1915 (m3Psi1915) in 23S rRNA.</text>
</comment>
<comment type="catalytic activity">
    <reaction evidence="1">
        <text>pseudouridine(1915) in 23S rRNA + S-adenosyl-L-methionine = N(3)-methylpseudouridine(1915) in 23S rRNA + S-adenosyl-L-homocysteine + H(+)</text>
        <dbReference type="Rhea" id="RHEA:42752"/>
        <dbReference type="Rhea" id="RHEA-COMP:10221"/>
        <dbReference type="Rhea" id="RHEA-COMP:10222"/>
        <dbReference type="ChEBI" id="CHEBI:15378"/>
        <dbReference type="ChEBI" id="CHEBI:57856"/>
        <dbReference type="ChEBI" id="CHEBI:59789"/>
        <dbReference type="ChEBI" id="CHEBI:65314"/>
        <dbReference type="ChEBI" id="CHEBI:74486"/>
        <dbReference type="EC" id="2.1.1.177"/>
    </reaction>
</comment>
<comment type="subunit">
    <text evidence="1">Homodimer.</text>
</comment>
<comment type="subcellular location">
    <subcellularLocation>
        <location evidence="1">Cytoplasm</location>
    </subcellularLocation>
</comment>
<comment type="similarity">
    <text evidence="1">Belongs to the RNA methyltransferase RlmH family.</text>
</comment>
<protein>
    <recommendedName>
        <fullName evidence="1">Ribosomal RNA large subunit methyltransferase H</fullName>
        <ecNumber evidence="1">2.1.1.177</ecNumber>
    </recommendedName>
    <alternativeName>
        <fullName evidence="1">23S rRNA (pseudouridine1915-N3)-methyltransferase</fullName>
    </alternativeName>
    <alternativeName>
        <fullName evidence="1">23S rRNA m3Psi1915 methyltransferase</fullName>
    </alternativeName>
    <alternativeName>
        <fullName evidence="1">rRNA (pseudouridine-N3-)-methyltransferase RlmH</fullName>
    </alternativeName>
</protein>
<keyword id="KW-0963">Cytoplasm</keyword>
<keyword id="KW-0489">Methyltransferase</keyword>
<keyword id="KW-1185">Reference proteome</keyword>
<keyword id="KW-0698">rRNA processing</keyword>
<keyword id="KW-0949">S-adenosyl-L-methionine</keyword>
<keyword id="KW-0808">Transferase</keyword>